<gene>
    <name evidence="1" type="primary">PAC1-2</name>
    <name evidence="1" type="synonym">LIS1-2</name>
    <name type="ORF">POSPLDRAFT_89201</name>
</gene>
<evidence type="ECO:0000255" key="1">
    <source>
        <dbReference type="HAMAP-Rule" id="MF_03141"/>
    </source>
</evidence>
<accession>B8PD53</accession>
<organism>
    <name type="scientific">Postia placenta (strain ATCC 44394 / Madison 698-R)</name>
    <name type="common">Brown rot fungus</name>
    <name type="synonym">Poria monticola</name>
    <dbReference type="NCBI Taxonomy" id="561896"/>
    <lineage>
        <taxon>Eukaryota</taxon>
        <taxon>Fungi</taxon>
        <taxon>Dikarya</taxon>
        <taxon>Basidiomycota</taxon>
        <taxon>Agaricomycotina</taxon>
        <taxon>Agaricomycetes</taxon>
        <taxon>Polyporales</taxon>
        <taxon>Adustoporiaceae</taxon>
        <taxon>Rhodonia</taxon>
    </lineage>
</organism>
<sequence length="427" mass="47542">MSILSERQKDDLNKSIAEYLYAQDLTEIADSLCARLSLDYKSEPNSKYAGLLEKKWVSVIRLQKKLIESENRYTALQEDIAAGPARRRDAQVDWLPTAPARYTLTSHRAPITRVAFHPTFSLLASASEDTTVKIWDWETGSFERTLKGHTREVWGVDFDSKGSFLATCSSDLSIKVWDTQQWDNAGYSGKTLRGHEHTVSTVKFLPGDDLIASASRDKTIRIWEVATTFCIRTITGHEDWVRMTVPSTDGTLLGSCSSDNTARVWDPTSGVMKMEFRGHGHIVEVIAFAPLASYAAIRELAGLKAATKAPGAYIATGSRDKTVKIWDVHSGQELRTVSGHNDWIRGLVFHPSGKHLLSASDDKTIRVWELSTGRCMXVVEAHSHFITCLAWGPPVSAVARVELPRTPFCGDPKPIASRIMEEFNPRP</sequence>
<feature type="chain" id="PRO_0000405099" description="Nuclear distribution protein PAC1-2">
    <location>
        <begin position="1"/>
        <end position="427"/>
    </location>
</feature>
<feature type="domain" description="LisH" evidence="1">
    <location>
        <begin position="8"/>
        <end position="40"/>
    </location>
</feature>
<feature type="repeat" description="WD 1">
    <location>
        <begin position="106"/>
        <end position="147"/>
    </location>
</feature>
<feature type="repeat" description="WD 2">
    <location>
        <begin position="149"/>
        <end position="187"/>
    </location>
</feature>
<feature type="repeat" description="WD 3">
    <location>
        <begin position="194"/>
        <end position="233"/>
    </location>
</feature>
<feature type="repeat" description="WD 4">
    <location>
        <begin position="236"/>
        <end position="275"/>
    </location>
</feature>
<feature type="repeat" description="WD 5">
    <location>
        <begin position="278"/>
        <end position="336"/>
    </location>
</feature>
<feature type="repeat" description="WD 6">
    <location>
        <begin position="339"/>
        <end position="378"/>
    </location>
</feature>
<feature type="repeat" description="WD 7">
    <location>
        <begin position="381"/>
        <end position="420"/>
    </location>
</feature>
<feature type="coiled-coil region" evidence="1">
    <location>
        <begin position="58"/>
        <end position="82"/>
    </location>
</feature>
<reference key="1">
    <citation type="journal article" date="2009" name="Proc. Natl. Acad. Sci. U.S.A.">
        <title>Genome, transcriptome, and secretome analysis of wood decay fungus Postia placenta supports unique mechanisms of lignocellulose conversion.</title>
        <authorList>
            <person name="Martinez D."/>
            <person name="Challacombe J."/>
            <person name="Morgenstern I."/>
            <person name="Hibbett D."/>
            <person name="Schmoll M."/>
            <person name="Kubicek C.P."/>
            <person name="Ferreira P."/>
            <person name="Ruiz-Duenas F.J."/>
            <person name="Martinez A.T."/>
            <person name="Kersten P."/>
            <person name="Hammel K.E."/>
            <person name="Vanden Wymelenberg A."/>
            <person name="Gaskell J."/>
            <person name="Lindquist E."/>
            <person name="Sabat G."/>
            <person name="Splinter BonDurant S."/>
            <person name="Larrondo L.F."/>
            <person name="Canessa P."/>
            <person name="Vicuna R."/>
            <person name="Yadav J."/>
            <person name="Doddapaneni H."/>
            <person name="Subramanian V."/>
            <person name="Pisabarro A.G."/>
            <person name="Lavin J.L."/>
            <person name="Oguiza J.A."/>
            <person name="Master E."/>
            <person name="Henrissat B."/>
            <person name="Coutinho P.M."/>
            <person name="Harris P."/>
            <person name="Magnuson J.K."/>
            <person name="Baker S.E."/>
            <person name="Bruno K."/>
            <person name="Kenealy W."/>
            <person name="Hoegger P.J."/>
            <person name="Kuees U."/>
            <person name="Ramaiya P."/>
            <person name="Lucas S."/>
            <person name="Salamov A."/>
            <person name="Shapiro H."/>
            <person name="Tu H."/>
            <person name="Chee C.L."/>
            <person name="Misra M."/>
            <person name="Xie G."/>
            <person name="Teter S."/>
            <person name="Yaver D."/>
            <person name="James T."/>
            <person name="Mokrejs M."/>
            <person name="Pospisek M."/>
            <person name="Grigoriev I.V."/>
            <person name="Brettin T."/>
            <person name="Rokhsar D."/>
            <person name="Berka R."/>
            <person name="Cullen D."/>
        </authorList>
    </citation>
    <scope>NUCLEOTIDE SEQUENCE [LARGE SCALE GENOMIC DNA]</scope>
    <source>
        <strain>ATCC 44394 / Madison 698-R</strain>
    </source>
</reference>
<protein>
    <recommendedName>
        <fullName evidence="1">Nuclear distribution protein PAC1-2</fullName>
    </recommendedName>
    <alternativeName>
        <fullName evidence="1">Lissencephaly-1 homolog 2</fullName>
        <shortName evidence="1">LIS-1 2</shortName>
    </alternativeName>
    <alternativeName>
        <fullName evidence="1">nudF homolog 2</fullName>
    </alternativeName>
</protein>
<keyword id="KW-0131">Cell cycle</keyword>
<keyword id="KW-0132">Cell division</keyword>
<keyword id="KW-0175">Coiled coil</keyword>
<keyword id="KW-0963">Cytoplasm</keyword>
<keyword id="KW-0206">Cytoskeleton</keyword>
<keyword id="KW-0493">Microtubule</keyword>
<keyword id="KW-0498">Mitosis</keyword>
<keyword id="KW-0677">Repeat</keyword>
<keyword id="KW-0813">Transport</keyword>
<keyword id="KW-0853">WD repeat</keyword>
<dbReference type="EMBL" id="EQ966319">
    <property type="protein sequence ID" value="EED81189.1"/>
    <property type="molecule type" value="Genomic_DNA"/>
</dbReference>
<dbReference type="RefSeq" id="XP_002473604.1">
    <property type="nucleotide sequence ID" value="XM_002473559.1"/>
</dbReference>
<dbReference type="STRING" id="561896.B8PD53"/>
<dbReference type="KEGG" id="ppl:POSPLDRAFT_89201"/>
<dbReference type="HOGENOM" id="CLU_000288_57_15_1"/>
<dbReference type="InParanoid" id="B8PD53"/>
<dbReference type="OMA" id="CIRWAPP"/>
<dbReference type="OrthoDB" id="10264588at2759"/>
<dbReference type="GO" id="GO:0005737">
    <property type="term" value="C:cytoplasm"/>
    <property type="evidence" value="ECO:0007669"/>
    <property type="project" value="UniProtKB-UniRule"/>
</dbReference>
<dbReference type="GO" id="GO:0005874">
    <property type="term" value="C:microtubule"/>
    <property type="evidence" value="ECO:0007669"/>
    <property type="project" value="UniProtKB-KW"/>
</dbReference>
<dbReference type="GO" id="GO:0005875">
    <property type="term" value="C:microtubule associated complex"/>
    <property type="evidence" value="ECO:0007669"/>
    <property type="project" value="UniProtKB-UniRule"/>
</dbReference>
<dbReference type="GO" id="GO:0000922">
    <property type="term" value="C:spindle pole"/>
    <property type="evidence" value="ECO:0007669"/>
    <property type="project" value="UniProtKB-SubCell"/>
</dbReference>
<dbReference type="GO" id="GO:0070840">
    <property type="term" value="F:dynein complex binding"/>
    <property type="evidence" value="ECO:0007669"/>
    <property type="project" value="UniProtKB-UniRule"/>
</dbReference>
<dbReference type="GO" id="GO:0051301">
    <property type="term" value="P:cell division"/>
    <property type="evidence" value="ECO:0007669"/>
    <property type="project" value="UniProtKB-KW"/>
</dbReference>
<dbReference type="GO" id="GO:0000132">
    <property type="term" value="P:establishment of mitotic spindle orientation"/>
    <property type="evidence" value="ECO:0007669"/>
    <property type="project" value="UniProtKB-UniRule"/>
</dbReference>
<dbReference type="GO" id="GO:0051012">
    <property type="term" value="P:microtubule sliding"/>
    <property type="evidence" value="ECO:0007669"/>
    <property type="project" value="UniProtKB-UniRule"/>
</dbReference>
<dbReference type="CDD" id="cd00200">
    <property type="entry name" value="WD40"/>
    <property type="match status" value="1"/>
</dbReference>
<dbReference type="Gene3D" id="1.20.960.30">
    <property type="match status" value="1"/>
</dbReference>
<dbReference type="Gene3D" id="2.130.10.10">
    <property type="entry name" value="YVTN repeat-like/Quinoprotein amine dehydrogenase"/>
    <property type="match status" value="1"/>
</dbReference>
<dbReference type="HAMAP" id="MF_03141">
    <property type="entry name" value="lis1"/>
    <property type="match status" value="1"/>
</dbReference>
<dbReference type="InterPro" id="IPR017252">
    <property type="entry name" value="Dynein_regulator_LIS1"/>
</dbReference>
<dbReference type="InterPro" id="IPR020472">
    <property type="entry name" value="G-protein_beta_WD-40_rep"/>
</dbReference>
<dbReference type="InterPro" id="IPR037190">
    <property type="entry name" value="LIS1_N"/>
</dbReference>
<dbReference type="InterPro" id="IPR006594">
    <property type="entry name" value="LisH"/>
</dbReference>
<dbReference type="InterPro" id="IPR056795">
    <property type="entry name" value="PAC1-like_LisH-like_dom"/>
</dbReference>
<dbReference type="InterPro" id="IPR015943">
    <property type="entry name" value="WD40/YVTN_repeat-like_dom_sf"/>
</dbReference>
<dbReference type="InterPro" id="IPR019775">
    <property type="entry name" value="WD40_repeat_CS"/>
</dbReference>
<dbReference type="InterPro" id="IPR036322">
    <property type="entry name" value="WD40_repeat_dom_sf"/>
</dbReference>
<dbReference type="InterPro" id="IPR001680">
    <property type="entry name" value="WD40_rpt"/>
</dbReference>
<dbReference type="PANTHER" id="PTHR19879">
    <property type="entry name" value="TRANSCRIPTION INITIATION FACTOR TFIID"/>
    <property type="match status" value="1"/>
</dbReference>
<dbReference type="PANTHER" id="PTHR19879:SF9">
    <property type="entry name" value="TRANSCRIPTION INITIATION FACTOR TFIID SUBUNIT 5"/>
    <property type="match status" value="1"/>
</dbReference>
<dbReference type="Pfam" id="PF24951">
    <property type="entry name" value="LisH_PAC1"/>
    <property type="match status" value="1"/>
</dbReference>
<dbReference type="Pfam" id="PF00400">
    <property type="entry name" value="WD40"/>
    <property type="match status" value="6"/>
</dbReference>
<dbReference type="PIRSF" id="PIRSF037647">
    <property type="entry name" value="Dynein_regulator_Lis1"/>
    <property type="match status" value="1"/>
</dbReference>
<dbReference type="PRINTS" id="PR00320">
    <property type="entry name" value="GPROTEINBRPT"/>
</dbReference>
<dbReference type="SMART" id="SM00320">
    <property type="entry name" value="WD40"/>
    <property type="match status" value="6"/>
</dbReference>
<dbReference type="SUPFAM" id="SSF109925">
    <property type="entry name" value="Lissencephaly-1 protein (Lis-1, PAF-AH alpha) N-terminal domain"/>
    <property type="match status" value="1"/>
</dbReference>
<dbReference type="SUPFAM" id="SSF50978">
    <property type="entry name" value="WD40 repeat-like"/>
    <property type="match status" value="1"/>
</dbReference>
<dbReference type="PROSITE" id="PS50896">
    <property type="entry name" value="LISH"/>
    <property type="match status" value="1"/>
</dbReference>
<dbReference type="PROSITE" id="PS00678">
    <property type="entry name" value="WD_REPEATS_1"/>
    <property type="match status" value="4"/>
</dbReference>
<dbReference type="PROSITE" id="PS50082">
    <property type="entry name" value="WD_REPEATS_2"/>
    <property type="match status" value="6"/>
</dbReference>
<dbReference type="PROSITE" id="PS50294">
    <property type="entry name" value="WD_REPEATS_REGION"/>
    <property type="match status" value="1"/>
</dbReference>
<name>LIS12_POSPM</name>
<proteinExistence type="inferred from homology"/>
<comment type="function">
    <text evidence="1">Positively regulates the activity of the minus-end directed microtubule motor protein dynein. May enhance dynein-mediated microtubule sliding by targeting dynein to the microtubule plus end. Required for nuclear migration during vegetative growth as well as development. Required for retrograde early endosome (EE) transport from the hyphal tip. Required for localization of dynein to the mitotic spindle poles. Recruits additional proteins to the dynein complex at SPBs.</text>
</comment>
<comment type="subunit">
    <text evidence="1">Self-associates. Interacts with NDL1 and dynein.</text>
</comment>
<comment type="subcellular location">
    <subcellularLocation>
        <location evidence="1">Cytoplasm</location>
        <location evidence="1">Cytoskeleton</location>
    </subcellularLocation>
    <subcellularLocation>
        <location evidence="1">Cytoplasm</location>
        <location evidence="1">Cytoskeleton</location>
        <location evidence="1">Spindle pole</location>
    </subcellularLocation>
    <text evidence="1">Localizes to the plus ends of microtubules at the hyphal tip and the mitotic spindle poles.</text>
</comment>
<comment type="domain">
    <text evidence="1">Dimerization mediated by the LisH domain may be required to activate dynein.</text>
</comment>
<comment type="similarity">
    <text evidence="1">Belongs to the WD repeat LIS1/nudF family.</text>
</comment>